<feature type="chain" id="PRO_0000047103" description="BCL11 transcription factor A">
    <location>
        <begin position="1"/>
        <end position="835"/>
    </location>
</feature>
<feature type="zinc finger region" description="C2HC-type" evidence="1">
    <location>
        <begin position="45"/>
        <end position="71"/>
    </location>
</feature>
<feature type="zinc finger region" description="C2H2-type 1" evidence="2">
    <location>
        <begin position="170"/>
        <end position="193"/>
    </location>
</feature>
<feature type="zinc finger region" description="C2H2-type 2" evidence="2">
    <location>
        <begin position="377"/>
        <end position="399"/>
    </location>
</feature>
<feature type="zinc finger region" description="C2H2-type 3" evidence="2">
    <location>
        <begin position="405"/>
        <end position="429"/>
    </location>
</feature>
<feature type="zinc finger region" description="C2H2-type 4" evidence="1">
    <location>
        <begin position="742"/>
        <end position="764"/>
    </location>
</feature>
<feature type="zinc finger region" description="C2H2-type 5" evidence="1">
    <location>
        <begin position="770"/>
        <end position="792"/>
    </location>
</feature>
<feature type="zinc finger region" description="C2H2-type 6" evidence="1">
    <location>
        <begin position="800"/>
        <end position="823"/>
    </location>
</feature>
<feature type="region of interest" description="Required for nuclear body formation and for SUMO1 recruitment">
    <location>
        <begin position="1"/>
        <end position="210"/>
    </location>
</feature>
<feature type="region of interest" description="Disordered" evidence="3">
    <location>
        <begin position="1"/>
        <end position="41"/>
    </location>
</feature>
<feature type="region of interest" description="Disordered" evidence="3">
    <location>
        <begin position="323"/>
        <end position="376"/>
    </location>
</feature>
<feature type="region of interest" description="Disordered" evidence="3">
    <location>
        <begin position="421"/>
        <end position="458"/>
    </location>
</feature>
<feature type="region of interest" description="Disordered" evidence="3">
    <location>
        <begin position="471"/>
        <end position="512"/>
    </location>
</feature>
<feature type="region of interest" description="Disordered" evidence="3">
    <location>
        <begin position="572"/>
        <end position="619"/>
    </location>
</feature>
<feature type="region of interest" description="DNA-binding" evidence="1">
    <location>
        <begin position="737"/>
        <end position="835"/>
    </location>
</feature>
<feature type="region of interest" description="Disordered" evidence="1">
    <location>
        <begin position="765"/>
        <end position="769"/>
    </location>
</feature>
<feature type="region of interest" description="Disordered" evidence="1">
    <location>
        <begin position="793"/>
        <end position="799"/>
    </location>
</feature>
<feature type="compositionally biased region" description="Basic residues" evidence="3">
    <location>
        <begin position="1"/>
        <end position="12"/>
    </location>
</feature>
<feature type="compositionally biased region" description="Pro residues" evidence="3">
    <location>
        <begin position="355"/>
        <end position="372"/>
    </location>
</feature>
<feature type="compositionally biased region" description="Basic residues" evidence="3">
    <location>
        <begin position="421"/>
        <end position="430"/>
    </location>
</feature>
<feature type="compositionally biased region" description="Polar residues" evidence="3">
    <location>
        <begin position="441"/>
        <end position="450"/>
    </location>
</feature>
<feature type="compositionally biased region" description="Acidic residues" evidence="3">
    <location>
        <begin position="482"/>
        <end position="506"/>
    </location>
</feature>
<feature type="compositionally biased region" description="Basic and acidic residues" evidence="3">
    <location>
        <begin position="574"/>
        <end position="584"/>
    </location>
</feature>
<feature type="compositionally biased region" description="Low complexity" evidence="3">
    <location>
        <begin position="682"/>
        <end position="696"/>
    </location>
</feature>
<feature type="compositionally biased region" description="Gly residues" evidence="3">
    <location>
        <begin position="706"/>
        <end position="720"/>
    </location>
</feature>
<feature type="compositionally biased region" description="Polar residues" evidence="3">
    <location>
        <begin position="764"/>
        <end position="773"/>
    </location>
</feature>
<feature type="binding site" evidence="1">
    <location>
        <position position="48"/>
    </location>
    <ligand>
        <name>Zn(2+)</name>
        <dbReference type="ChEBI" id="CHEBI:29105"/>
        <label>1</label>
    </ligand>
</feature>
<feature type="binding site" evidence="1">
    <location>
        <position position="51"/>
    </location>
    <ligand>
        <name>Zn(2+)</name>
        <dbReference type="ChEBI" id="CHEBI:29105"/>
        <label>1</label>
    </ligand>
</feature>
<feature type="binding site" evidence="1">
    <location>
        <position position="66"/>
    </location>
    <ligand>
        <name>Zn(2+)</name>
        <dbReference type="ChEBI" id="CHEBI:29105"/>
        <label>1</label>
    </ligand>
</feature>
<feature type="binding site" evidence="1">
    <location>
        <position position="71"/>
    </location>
    <ligand>
        <name>Zn(2+)</name>
        <dbReference type="ChEBI" id="CHEBI:29105"/>
        <label>1</label>
    </ligand>
</feature>
<feature type="binding site" evidence="1">
    <location>
        <position position="744"/>
    </location>
    <ligand>
        <name>Zn(2+)</name>
        <dbReference type="ChEBI" id="CHEBI:29105"/>
        <label>2</label>
    </ligand>
</feature>
<feature type="binding site" evidence="1">
    <location>
        <position position="747"/>
    </location>
    <ligand>
        <name>Zn(2+)</name>
        <dbReference type="ChEBI" id="CHEBI:29105"/>
        <label>2</label>
    </ligand>
</feature>
<feature type="binding site" evidence="1">
    <location>
        <position position="760"/>
    </location>
    <ligand>
        <name>Zn(2+)</name>
        <dbReference type="ChEBI" id="CHEBI:29105"/>
        <label>2</label>
    </ligand>
</feature>
<feature type="binding site" evidence="1">
    <location>
        <position position="764"/>
    </location>
    <ligand>
        <name>Zn(2+)</name>
        <dbReference type="ChEBI" id="CHEBI:29105"/>
        <label>2</label>
    </ligand>
</feature>
<feature type="binding site" evidence="1">
    <location>
        <position position="772"/>
    </location>
    <ligand>
        <name>Zn(2+)</name>
        <dbReference type="ChEBI" id="CHEBI:29105"/>
        <label>3</label>
    </ligand>
</feature>
<feature type="binding site" evidence="1">
    <location>
        <position position="775"/>
    </location>
    <ligand>
        <name>Zn(2+)</name>
        <dbReference type="ChEBI" id="CHEBI:29105"/>
        <label>3</label>
    </ligand>
</feature>
<feature type="binding site" evidence="1">
    <location>
        <position position="788"/>
    </location>
    <ligand>
        <name>Zn(2+)</name>
        <dbReference type="ChEBI" id="CHEBI:29105"/>
        <label>3</label>
    </ligand>
</feature>
<feature type="binding site" evidence="1">
    <location>
        <position position="792"/>
    </location>
    <ligand>
        <name>Zn(2+)</name>
        <dbReference type="ChEBI" id="CHEBI:29105"/>
        <label>3</label>
    </ligand>
</feature>
<feature type="binding site" evidence="1">
    <location>
        <position position="802"/>
    </location>
    <ligand>
        <name>Zn(2+)</name>
        <dbReference type="ChEBI" id="CHEBI:29105"/>
        <label>4</label>
    </ligand>
</feature>
<feature type="binding site" evidence="1">
    <location>
        <position position="805"/>
    </location>
    <ligand>
        <name>Zn(2+)</name>
        <dbReference type="ChEBI" id="CHEBI:29105"/>
        <label>4</label>
    </ligand>
</feature>
<feature type="binding site" evidence="1">
    <location>
        <position position="818"/>
    </location>
    <ligand>
        <name>Zn(2+)</name>
        <dbReference type="ChEBI" id="CHEBI:29105"/>
        <label>4</label>
    </ligand>
</feature>
<feature type="binding site" evidence="1">
    <location>
        <position position="823"/>
    </location>
    <ligand>
        <name>Zn(2+)</name>
        <dbReference type="ChEBI" id="CHEBI:29105"/>
        <label>4</label>
    </ligand>
</feature>
<feature type="modified residue" description="Phosphoserine" evidence="15">
    <location>
        <position position="86"/>
    </location>
</feature>
<feature type="modified residue" description="Phosphoserine" evidence="1">
    <location>
        <position position="205"/>
    </location>
</feature>
<feature type="modified residue" description="Asymmetric dimethylarginine" evidence="16">
    <location>
        <position position="271"/>
    </location>
</feature>
<feature type="modified residue" description="Phosphoserine" evidence="15">
    <location>
        <position position="332"/>
    </location>
</feature>
<feature type="modified residue" description="Phosphoserine" evidence="15">
    <location>
        <position position="337"/>
    </location>
</feature>
<feature type="modified residue" description="Phosphoserine" evidence="15">
    <location>
        <position position="446"/>
    </location>
</feature>
<feature type="modified residue" description="Phosphoserine" evidence="15">
    <location>
        <position position="447"/>
    </location>
</feature>
<feature type="modified residue" description="Phosphoserine" evidence="15">
    <location>
        <position position="608"/>
    </location>
</feature>
<feature type="modified residue" description="Phosphoserine" evidence="15">
    <location>
        <position position="625"/>
    </location>
</feature>
<feature type="modified residue" description="Phosphoserine" evidence="15">
    <location>
        <position position="630"/>
    </location>
</feature>
<feature type="modified residue" description="Phosphothreonine" evidence="15">
    <location>
        <position position="701"/>
    </location>
</feature>
<feature type="cross-link" description="Glycyl lysine isopeptide (Lys-Gly) (interchain with G-Cter in SUMO2)" evidence="1">
    <location>
        <position position="123"/>
    </location>
</feature>
<feature type="cross-link" description="Glycyl lysine isopeptide (Lys-Gly) (interchain with G-Cter in SUMO2)" evidence="1">
    <location>
        <position position="164"/>
    </location>
</feature>
<feature type="cross-link" description="Glycyl lysine isopeptide (Lys-Gly) (interchain with G-Cter in SUMO2)" evidence="1">
    <location>
        <position position="620"/>
    </location>
</feature>
<feature type="cross-link" description="Glycyl lysine isopeptide (Lys-Gly) (interchain with G-Cter in SUMO1)" evidence="7">
    <location>
        <position position="634"/>
    </location>
</feature>
<feature type="splice variant" id="VSP_009556" description="In isoform 4." evidence="13">
    <location>
        <begin position="1"/>
        <end position="423"/>
    </location>
</feature>
<feature type="splice variant" id="VSP_009557" description="In isoform 2 and isoform 8." evidence="10 12">
    <location>
        <begin position="1"/>
        <end position="286"/>
    </location>
</feature>
<feature type="splice variant" id="VSP_009558" description="In isoform 6." evidence="13">
    <location>
        <begin position="1"/>
        <end position="52"/>
    </location>
</feature>
<feature type="splice variant" id="VSP_009559" description="In isoform 7." evidence="11">
    <location>
        <begin position="131"/>
        <end position="835"/>
    </location>
</feature>
<feature type="splice variant" id="VSP_009560" description="In isoform 3." evidence="10">
    <location>
        <begin position="212"/>
        <end position="744"/>
    </location>
</feature>
<feature type="splice variant" id="VSP_009561" description="In isoform 5 and isoform 6." evidence="12 13">
    <original>GIPSGLGAECPSQPPLHGIHIADNNPFNLLRI</original>
    <variation>LHTPPFGVVPRELKMCGSFRMEAQEPLSSEKL</variation>
    <location>
        <begin position="212"/>
        <end position="243"/>
    </location>
</feature>
<feature type="splice variant" id="VSP_009562" description="In isoform 5 and isoform 6." evidence="12 13">
    <location>
        <begin position="244"/>
        <end position="835"/>
    </location>
</feature>
<feature type="splice variant" id="VSP_009563" description="In isoform 2." evidence="10">
    <location>
        <begin position="726"/>
        <end position="835"/>
    </location>
</feature>
<feature type="mutagenesis site" description="No effect on sumoylation." evidence="7">
    <original>K</original>
    <variation>R</variation>
    <location>
        <position position="123"/>
    </location>
</feature>
<feature type="mutagenesis site" description="Abolishes sumoylation. No effect on nuclear body location." evidence="7">
    <original>K</original>
    <variation>R</variation>
    <location>
        <position position="637"/>
    </location>
</feature>
<feature type="sequence conflict" description="In Ref. 7; BAB23285." evidence="14" ref="7">
    <original>Q</original>
    <variation>K</variation>
    <location>
        <position position="104"/>
    </location>
</feature>
<feature type="sequence conflict" description="In Ref. 8; BAC65839." evidence="14" ref="8">
    <original>D</original>
    <variation>G</variation>
    <location>
        <position position="129"/>
    </location>
</feature>
<feature type="sequence conflict" description="In Ref. 5; AAF65929." evidence="14" ref="5">
    <original>V</original>
    <variation>G</variation>
    <location>
        <position position="211"/>
    </location>
</feature>
<feature type="sequence conflict" description="In Ref. 6; AAF63682." evidence="14" ref="6">
    <original>F</original>
    <variation>L</variation>
    <location>
        <position position="673"/>
    </location>
</feature>
<feature type="sequence conflict" description="In Ref. 5; AAF65928." evidence="14" ref="5">
    <original>F</original>
    <variation>L</variation>
    <location>
        <position position="699"/>
    </location>
</feature>
<feature type="sequence conflict" description="In Ref. 6; AAF63682." evidence="14" ref="6">
    <original>T</original>
    <variation>I</variation>
    <location>
        <position position="743"/>
    </location>
</feature>
<feature type="modified residue" description="Phosphothreonine" evidence="15">
    <location sequence="Q9QYE3-13">
        <position position="214"/>
    </location>
</feature>
<feature type="modified residue" description="Phosphothreonine" evidence="15">
    <location sequence="Q9QYE3-14">
        <position position="162"/>
    </location>
</feature>
<protein>
    <recommendedName>
        <fullName>BCL11 transcription factor A</fullName>
    </recommendedName>
    <alternativeName>
        <fullName>B-cell CLL/lymphoma 11A</fullName>
    </alternativeName>
    <alternativeName>
        <fullName>B-cell lymphoma/leukemia 11A</fullName>
        <shortName>BCL-11A</shortName>
    </alternativeName>
    <alternativeName>
        <fullName>COUP-TF-interacting protein 1</fullName>
    </alternativeName>
    <alternativeName>
        <fullName>Ecotropic viral integration site 9 protein</fullName>
        <shortName>EVI-9</shortName>
    </alternativeName>
</protein>
<reference key="1">
    <citation type="journal article" date="2009" name="PLoS Biol.">
        <title>Lineage-specific biology revealed by a finished genome assembly of the mouse.</title>
        <authorList>
            <person name="Church D.M."/>
            <person name="Goodstadt L."/>
            <person name="Hillier L.W."/>
            <person name="Zody M.C."/>
            <person name="Goldstein S."/>
            <person name="She X."/>
            <person name="Bult C.J."/>
            <person name="Agarwala R."/>
            <person name="Cherry J.L."/>
            <person name="DiCuccio M."/>
            <person name="Hlavina W."/>
            <person name="Kapustin Y."/>
            <person name="Meric P."/>
            <person name="Maglott D."/>
            <person name="Birtle Z."/>
            <person name="Marques A.C."/>
            <person name="Graves T."/>
            <person name="Zhou S."/>
            <person name="Teague B."/>
            <person name="Potamousis K."/>
            <person name="Churas C."/>
            <person name="Place M."/>
            <person name="Herschleb J."/>
            <person name="Runnheim R."/>
            <person name="Forrest D."/>
            <person name="Amos-Landgraf J."/>
            <person name="Schwartz D.C."/>
            <person name="Cheng Z."/>
            <person name="Lindblad-Toh K."/>
            <person name="Eichler E.E."/>
            <person name="Ponting C.P."/>
        </authorList>
    </citation>
    <scope>NUCLEOTIDE SEQUENCE [LARGE SCALE GENOMIC DNA]</scope>
    <source>
        <strain>C57BL/6J</strain>
    </source>
</reference>
<reference key="2">
    <citation type="journal article" date="2010" name="Cell">
        <title>A tissue-specific atlas of mouse protein phosphorylation and expression.</title>
        <authorList>
            <person name="Huttlin E.L."/>
            <person name="Jedrychowski M.P."/>
            <person name="Elias J.E."/>
            <person name="Goswami T."/>
            <person name="Rad R."/>
            <person name="Beausoleil S.A."/>
            <person name="Villen J."/>
            <person name="Haas W."/>
            <person name="Sowa M.E."/>
            <person name="Gygi S.P."/>
        </authorList>
    </citation>
    <scope>IDENTIFICATION BY MASS SPECTROMETRY [LARGE SCALE ANALYSIS]</scope>
    <scope>PHOSPHORYLATION [LARGE SCALE ANALYSIS] AT SER-86; SER-332; SER-337; SER-446; SER-447; SER-608; SER-625; SER-630 AND THR-701</scope>
    <scope>PHOSPHORYLATION [LARGE SCALE ANALYSIS] AT THR-214 (ISOFORM 5)</scope>
    <scope>PHOSPHORYLATION [LARGE SCALE ANALYSIS] AT THR-162 (ISOFORM 6)</scope>
    <source>
        <tissue>Brain</tissue>
        <tissue>Spleen</tissue>
    </source>
</reference>
<reference key="3">
    <citation type="journal article" date="2011" name="PLoS Biol.">
        <title>Modernizing reference genome assemblies.</title>
        <authorList>
            <person name="Church D.M."/>
            <person name="Schneider V.A."/>
            <person name="Graves T."/>
            <person name="Auger K."/>
            <person name="Cunningham F."/>
            <person name="Bouk N."/>
            <person name="Chen H.C."/>
            <person name="Agarwala R."/>
            <person name="McLaren W.M."/>
            <person name="Ritchie G.R."/>
            <person name="Albracht D."/>
            <person name="Kremitzki M."/>
            <person name="Rock S."/>
            <person name="Kotkiewicz H."/>
            <person name="Kremitzki C."/>
            <person name="Wollam A."/>
            <person name="Trani L."/>
            <person name="Fulton L."/>
            <person name="Fulton R."/>
            <person name="Matthews L."/>
            <person name="Whitehead S."/>
            <person name="Chow W."/>
            <person name="Torrance J."/>
            <person name="Dunn M."/>
            <person name="Harden G."/>
            <person name="Threadgold G."/>
            <person name="Wood J."/>
            <person name="Collins J."/>
            <person name="Heath P."/>
            <person name="Griffiths G."/>
            <person name="Pelan S."/>
            <person name="Grafham D."/>
            <person name="Eichler E.E."/>
            <person name="Weinstock G."/>
            <person name="Mardis E.R."/>
            <person name="Wilson R.K."/>
            <person name="Howe K."/>
            <person name="Flicek P."/>
            <person name="Hubbard T."/>
        </authorList>
    </citation>
    <scope>NUCLEOTIDE SEQUENCE [LARGE SCALE GENOMIC DNA]</scope>
    <source>
        <strain>C57BL/6J</strain>
    </source>
</reference>
<reference key="4">
    <citation type="journal article" date="2014" name="Mol. Cell. Proteomics">
        <title>Immunoaffinity enrichment and mass spectrometry analysis of protein methylation.</title>
        <authorList>
            <person name="Guo A."/>
            <person name="Gu H."/>
            <person name="Zhou J."/>
            <person name="Mulhern D."/>
            <person name="Wang Y."/>
            <person name="Lee K.A."/>
            <person name="Yang V."/>
            <person name="Aguiar M."/>
            <person name="Kornhauser J."/>
            <person name="Jia X."/>
            <person name="Ren J."/>
            <person name="Beausoleil S.A."/>
            <person name="Silva J.C."/>
            <person name="Vemulapalli V."/>
            <person name="Bedford M.T."/>
            <person name="Comb M.J."/>
        </authorList>
    </citation>
    <scope>IDENTIFICATION BY MASS SPECTROMETRY [LARGE SCALE ANALYSIS]</scope>
    <scope>METHYLATION [LARGE SCALE ANALYSIS] AT ARG-271</scope>
    <source>
        <tissue>Embryo</tissue>
    </source>
</reference>
<reference key="5">
    <citation type="journal article" date="2000" name="Mol. Cell. Biol.">
        <title>Evi9 encodes a novel zinc finger protein that physically interacts with BCL6, a known human B-cell proto-oncogene product.</title>
        <authorList>
            <person name="Nakamura T."/>
            <person name="Yamazaki Y."/>
            <person name="Saiki Y."/>
            <person name="Moriyama M."/>
            <person name="Largaespada D.A."/>
            <person name="Jenkins N.A."/>
            <person name="Copeland N.G."/>
        </authorList>
    </citation>
    <scope>NUCLEOTIDE SEQUENCE [MRNA] (ISOFORMS 1; 2 AND 3)</scope>
    <scope>FUNCTION</scope>
    <source>
        <strain>BXH/2</strain>
    </source>
</reference>
<reference key="6">
    <citation type="journal article" date="2000" name="J. Biol. Chem.">
        <title>Isolation of a novel family of C(2)H(2) zinc finger proteins implicated in transcriptional repression mediated by chicken ovalbumin upstream promoter transcription factor (COUP-TF) orphan nuclear receptors.</title>
        <authorList>
            <person name="Avram D."/>
            <person name="Fields A."/>
            <person name="Pretty On Top K."/>
            <person name="Nevrivy D.J."/>
            <person name="Ishmael J.E."/>
            <person name="Leid M."/>
        </authorList>
    </citation>
    <scope>NUCLEOTIDE SEQUENCE [MRNA] (ISOFORM 1)</scope>
    <scope>INTERACTION WITH NR2F1; NR2F6 AND NR2F2</scope>
    <source>
        <strain>BALB/cJ</strain>
        <tissue>Brain</tissue>
    </source>
</reference>
<reference key="7">
    <citation type="journal article" date="2005" name="Science">
        <title>The transcriptional landscape of the mammalian genome.</title>
        <authorList>
            <person name="Carninci P."/>
            <person name="Kasukawa T."/>
            <person name="Katayama S."/>
            <person name="Gough J."/>
            <person name="Frith M.C."/>
            <person name="Maeda N."/>
            <person name="Oyama R."/>
            <person name="Ravasi T."/>
            <person name="Lenhard B."/>
            <person name="Wells C."/>
            <person name="Kodzius R."/>
            <person name="Shimokawa K."/>
            <person name="Bajic V.B."/>
            <person name="Brenner S.E."/>
            <person name="Batalov S."/>
            <person name="Forrest A.R."/>
            <person name="Zavolan M."/>
            <person name="Davis M.J."/>
            <person name="Wilming L.G."/>
            <person name="Aidinis V."/>
            <person name="Allen J.E."/>
            <person name="Ambesi-Impiombato A."/>
            <person name="Apweiler R."/>
            <person name="Aturaliya R.N."/>
            <person name="Bailey T.L."/>
            <person name="Bansal M."/>
            <person name="Baxter L."/>
            <person name="Beisel K.W."/>
            <person name="Bersano T."/>
            <person name="Bono H."/>
            <person name="Chalk A.M."/>
            <person name="Chiu K.P."/>
            <person name="Choudhary V."/>
            <person name="Christoffels A."/>
            <person name="Clutterbuck D.R."/>
            <person name="Crowe M.L."/>
            <person name="Dalla E."/>
            <person name="Dalrymple B.P."/>
            <person name="de Bono B."/>
            <person name="Della Gatta G."/>
            <person name="di Bernardo D."/>
            <person name="Down T."/>
            <person name="Engstrom P."/>
            <person name="Fagiolini M."/>
            <person name="Faulkner G."/>
            <person name="Fletcher C.F."/>
            <person name="Fukushima T."/>
            <person name="Furuno M."/>
            <person name="Futaki S."/>
            <person name="Gariboldi M."/>
            <person name="Georgii-Hemming P."/>
            <person name="Gingeras T.R."/>
            <person name="Gojobori T."/>
            <person name="Green R.E."/>
            <person name="Gustincich S."/>
            <person name="Harbers M."/>
            <person name="Hayashi Y."/>
            <person name="Hensch T.K."/>
            <person name="Hirokawa N."/>
            <person name="Hill D."/>
            <person name="Huminiecki L."/>
            <person name="Iacono M."/>
            <person name="Ikeo K."/>
            <person name="Iwama A."/>
            <person name="Ishikawa T."/>
            <person name="Jakt M."/>
            <person name="Kanapin A."/>
            <person name="Katoh M."/>
            <person name="Kawasawa Y."/>
            <person name="Kelso J."/>
            <person name="Kitamura H."/>
            <person name="Kitano H."/>
            <person name="Kollias G."/>
            <person name="Krishnan S.P."/>
            <person name="Kruger A."/>
            <person name="Kummerfeld S.K."/>
            <person name="Kurochkin I.V."/>
            <person name="Lareau L.F."/>
            <person name="Lazarevic D."/>
            <person name="Lipovich L."/>
            <person name="Liu J."/>
            <person name="Liuni S."/>
            <person name="McWilliam S."/>
            <person name="Madan Babu M."/>
            <person name="Madera M."/>
            <person name="Marchionni L."/>
            <person name="Matsuda H."/>
            <person name="Matsuzawa S."/>
            <person name="Miki H."/>
            <person name="Mignone F."/>
            <person name="Miyake S."/>
            <person name="Morris K."/>
            <person name="Mottagui-Tabar S."/>
            <person name="Mulder N."/>
            <person name="Nakano N."/>
            <person name="Nakauchi H."/>
            <person name="Ng P."/>
            <person name="Nilsson R."/>
            <person name="Nishiguchi S."/>
            <person name="Nishikawa S."/>
            <person name="Nori F."/>
            <person name="Ohara O."/>
            <person name="Okazaki Y."/>
            <person name="Orlando V."/>
            <person name="Pang K.C."/>
            <person name="Pavan W.J."/>
            <person name="Pavesi G."/>
            <person name="Pesole G."/>
            <person name="Petrovsky N."/>
            <person name="Piazza S."/>
            <person name="Reed J."/>
            <person name="Reid J.F."/>
            <person name="Ring B.Z."/>
            <person name="Ringwald M."/>
            <person name="Rost B."/>
            <person name="Ruan Y."/>
            <person name="Salzberg S.L."/>
            <person name="Sandelin A."/>
            <person name="Schneider C."/>
            <person name="Schoenbach C."/>
            <person name="Sekiguchi K."/>
            <person name="Semple C.A."/>
            <person name="Seno S."/>
            <person name="Sessa L."/>
            <person name="Sheng Y."/>
            <person name="Shibata Y."/>
            <person name="Shimada H."/>
            <person name="Shimada K."/>
            <person name="Silva D."/>
            <person name="Sinclair B."/>
            <person name="Sperling S."/>
            <person name="Stupka E."/>
            <person name="Sugiura K."/>
            <person name="Sultana R."/>
            <person name="Takenaka Y."/>
            <person name="Taki K."/>
            <person name="Tammoja K."/>
            <person name="Tan S.L."/>
            <person name="Tang S."/>
            <person name="Taylor M.S."/>
            <person name="Tegner J."/>
            <person name="Teichmann S.A."/>
            <person name="Ueda H.R."/>
            <person name="van Nimwegen E."/>
            <person name="Verardo R."/>
            <person name="Wei C.L."/>
            <person name="Yagi K."/>
            <person name="Yamanishi H."/>
            <person name="Zabarovsky E."/>
            <person name="Zhu S."/>
            <person name="Zimmer A."/>
            <person name="Hide W."/>
            <person name="Bult C."/>
            <person name="Grimmond S.M."/>
            <person name="Teasdale R.D."/>
            <person name="Liu E.T."/>
            <person name="Brusic V."/>
            <person name="Quackenbush J."/>
            <person name="Wahlestedt C."/>
            <person name="Mattick J.S."/>
            <person name="Hume D.A."/>
            <person name="Kai C."/>
            <person name="Sasaki D."/>
            <person name="Tomaru Y."/>
            <person name="Fukuda S."/>
            <person name="Kanamori-Katayama M."/>
            <person name="Suzuki M."/>
            <person name="Aoki J."/>
            <person name="Arakawa T."/>
            <person name="Iida J."/>
            <person name="Imamura K."/>
            <person name="Itoh M."/>
            <person name="Kato T."/>
            <person name="Kawaji H."/>
            <person name="Kawagashira N."/>
            <person name="Kawashima T."/>
            <person name="Kojima M."/>
            <person name="Kondo S."/>
            <person name="Konno H."/>
            <person name="Nakano K."/>
            <person name="Ninomiya N."/>
            <person name="Nishio T."/>
            <person name="Okada M."/>
            <person name="Plessy C."/>
            <person name="Shibata K."/>
            <person name="Shiraki T."/>
            <person name="Suzuki S."/>
            <person name="Tagami M."/>
            <person name="Waki K."/>
            <person name="Watahiki A."/>
            <person name="Okamura-Oho Y."/>
            <person name="Suzuki H."/>
            <person name="Kawai J."/>
            <person name="Hayashizaki Y."/>
        </authorList>
    </citation>
    <scope>NUCLEOTIDE SEQUENCE [LARGE SCALE MRNA] (ISOFORMS 4; 5 AND 6)</scope>
    <source>
        <strain>C57BL/6J</strain>
        <tissue>Brain</tissue>
        <tissue>Brain cortex</tissue>
        <tissue>Corpora quadrigemina</tissue>
        <tissue>Embryo</tissue>
        <tissue>Spinal cord</tissue>
    </source>
</reference>
<reference key="8">
    <citation type="journal article" date="2003" name="DNA Res.">
        <title>Prediction of the coding sequences of mouse homologues of KIAA gene: II. The complete nucleotide sequences of 400 mouse KIAA-homologous cDNAs identified by screening of terminal sequences of cDNA clones randomly sampled from size-fractionated libraries.</title>
        <authorList>
            <person name="Okazaki N."/>
            <person name="Kikuno R."/>
            <person name="Ohara R."/>
            <person name="Inamoto S."/>
            <person name="Aizawa H."/>
            <person name="Yuasa S."/>
            <person name="Nakajima D."/>
            <person name="Nagase T."/>
            <person name="Ohara O."/>
            <person name="Koga H."/>
        </authorList>
    </citation>
    <scope>NUCLEOTIDE SEQUENCE [LARGE SCALE MRNA] (ISOFORM 7)</scope>
    <source>
        <tissue>Brain</tissue>
    </source>
</reference>
<reference key="9">
    <citation type="journal article" date="2004" name="Genome Res.">
        <title>The status, quality, and expansion of the NIH full-length cDNA project: the Mammalian Gene Collection (MGC).</title>
        <authorList>
            <consortium name="The MGC Project Team"/>
        </authorList>
    </citation>
    <scope>NUCLEOTIDE SEQUENCE [LARGE SCALE MRNA] (ISOFORMS 5 AND 8)</scope>
    <source>
        <strain>FVB/N-3</strain>
        <tissue>Mammary tumor</tissue>
    </source>
</reference>
<reference key="10">
    <citation type="journal article" date="2003" name="Nat. Immunol.">
        <title>Bcl11a is essential for normal lymphoid development.</title>
        <authorList>
            <person name="Liu P."/>
            <person name="Keller J.R."/>
            <person name="Ortiz M."/>
            <person name="Tessarollo L."/>
            <person name="Rachel R.A."/>
            <person name="Nakamura T."/>
            <person name="Jenkins N.A."/>
            <person name="Copeland N.G."/>
        </authorList>
    </citation>
    <scope>FUNCTION</scope>
</reference>
<reference key="11">
    <citation type="journal article" date="2008" name="Genes Cells">
        <title>BCL11A is a SUMOylated protein and recruits SUMO-conjugation enzymes in its nuclear body.</title>
        <authorList>
            <person name="Kuwata T."/>
            <person name="Nakamura T."/>
        </authorList>
    </citation>
    <scope>SUMOYLATION AT LYS-634</scope>
    <scope>INTERACTION WITH PIAS3</scope>
    <scope>SUBCELLULAR LOCATION</scope>
    <scope>MUTAGENESIS OF LYS-123 AND LYS-637</scope>
</reference>
<reference key="12">
    <citation type="journal article" date="2013" name="Nat. Genet.">
        <title>Proteomic and bioinformatic analysis of mammalian SWI/SNF complexes identifies extensive roles in human malignancy.</title>
        <authorList>
            <person name="Kadoch C."/>
            <person name="Hargreaves D.C."/>
            <person name="Hodges C."/>
            <person name="Elias L."/>
            <person name="Ho L."/>
            <person name="Ranish J."/>
            <person name="Crabtree G.R."/>
        </authorList>
    </citation>
    <scope>FUNCTION</scope>
</reference>
<reference key="13">
    <citation type="journal article" date="2016" name="Am. J. Hum. Genet.">
        <title>BCL11A haploinsufficiency causes an intellectual disability syndrome and dysregulates transcription.</title>
        <authorList>
            <consortium name="DDD Study"/>
            <person name="Dias C."/>
            <person name="Estruch S.B."/>
            <person name="Grmaham S.A."/>
            <person name="McRae J."/>
            <person name="Sawiak S.J."/>
            <person name="Hurst J.A."/>
            <person name="Joss S.K."/>
            <person name="Holder S.E."/>
            <person name="Morton J.E."/>
            <person name="Turner C."/>
            <person name="Thevenon J."/>
            <person name="Mellul K."/>
            <person name="Sanchez-Andrade G."/>
            <person name="Ibarra-Soria X."/>
            <person name="Deriziotis P."/>
            <person name="Santos R.F."/>
            <person name="Lee S.C."/>
            <person name="Faivre L."/>
            <person name="Kleefstra T."/>
            <person name="Liu P."/>
            <person name="Hurles M.E."/>
            <person name="Fisher S.E."/>
            <person name="Logan D.W."/>
        </authorList>
    </citation>
    <scope>DISRUPTION PHENOTYPE</scope>
    <scope>DEVELOPMENTAL STAGE</scope>
    <scope>FUNCTION</scope>
</reference>
<proteinExistence type="evidence at protein level"/>
<organism>
    <name type="scientific">Mus musculus</name>
    <name type="common">Mouse</name>
    <dbReference type="NCBI Taxonomy" id="10090"/>
    <lineage>
        <taxon>Eukaryota</taxon>
        <taxon>Metazoa</taxon>
        <taxon>Chordata</taxon>
        <taxon>Craniata</taxon>
        <taxon>Vertebrata</taxon>
        <taxon>Euteleostomi</taxon>
        <taxon>Mammalia</taxon>
        <taxon>Eutheria</taxon>
        <taxon>Euarchontoglires</taxon>
        <taxon>Glires</taxon>
        <taxon>Rodentia</taxon>
        <taxon>Myomorpha</taxon>
        <taxon>Muroidea</taxon>
        <taxon>Muridae</taxon>
        <taxon>Murinae</taxon>
        <taxon>Mus</taxon>
        <taxon>Mus</taxon>
    </lineage>
</organism>
<evidence type="ECO:0000250" key="1">
    <source>
        <dbReference type="UniProtKB" id="Q9H165"/>
    </source>
</evidence>
<evidence type="ECO:0000255" key="2">
    <source>
        <dbReference type="PROSITE-ProRule" id="PRU00042"/>
    </source>
</evidence>
<evidence type="ECO:0000256" key="3">
    <source>
        <dbReference type="SAM" id="MobiDB-lite"/>
    </source>
</evidence>
<evidence type="ECO:0000269" key="4">
    <source>
    </source>
</evidence>
<evidence type="ECO:0000269" key="5">
    <source>
    </source>
</evidence>
<evidence type="ECO:0000269" key="6">
    <source>
    </source>
</evidence>
<evidence type="ECO:0000269" key="7">
    <source>
    </source>
</evidence>
<evidence type="ECO:0000269" key="8">
    <source>
    </source>
</evidence>
<evidence type="ECO:0000269" key="9">
    <source>
    </source>
</evidence>
<evidence type="ECO:0000303" key="10">
    <source>
    </source>
</evidence>
<evidence type="ECO:0000303" key="11">
    <source>
    </source>
</evidence>
<evidence type="ECO:0000303" key="12">
    <source>
    </source>
</evidence>
<evidence type="ECO:0000303" key="13">
    <source>
    </source>
</evidence>
<evidence type="ECO:0000305" key="14"/>
<evidence type="ECO:0007744" key="15">
    <source>
    </source>
</evidence>
<evidence type="ECO:0007744" key="16">
    <source>
    </source>
</evidence>
<gene>
    <name type="primary">Bcl11a</name>
    <name type="synonym">Ctip1</name>
    <name type="synonym">Evi9</name>
    <name type="synonym">Kiaa1809</name>
</gene>
<accession>Q9QYE3</accession>
<accession>Q5STS9</accession>
<accession>Q80T89</accession>
<accession>Q8BLC7</accession>
<accession>Q8BLR4</accession>
<accession>Q8BWX3</accession>
<accession>Q921V4</accession>
<accession>Q9D0V2</accession>
<accession>Q9JIT4</accession>
<accession>Q9JLK8</accession>
<accession>Q9JLK9</accession>
<keyword id="KW-0025">Alternative splicing</keyword>
<keyword id="KW-0963">Cytoplasm</keyword>
<keyword id="KW-0238">DNA-binding</keyword>
<keyword id="KW-1017">Isopeptide bond</keyword>
<keyword id="KW-0479">Metal-binding</keyword>
<keyword id="KW-0488">Methylation</keyword>
<keyword id="KW-0539">Nucleus</keyword>
<keyword id="KW-0597">Phosphoprotein</keyword>
<keyword id="KW-1185">Reference proteome</keyword>
<keyword id="KW-0677">Repeat</keyword>
<keyword id="KW-0678">Repressor</keyword>
<keyword id="KW-0804">Transcription</keyword>
<keyword id="KW-0805">Transcription regulation</keyword>
<keyword id="KW-0832">Ubl conjugation</keyword>
<keyword id="KW-0862">Zinc</keyword>
<keyword id="KW-0863">Zinc-finger</keyword>
<dbReference type="EMBL" id="AF051525">
    <property type="protein sequence ID" value="AAF22430.1"/>
    <property type="molecule type" value="mRNA"/>
</dbReference>
<dbReference type="EMBL" id="AF169036">
    <property type="protein sequence ID" value="AAF65928.1"/>
    <property type="molecule type" value="mRNA"/>
</dbReference>
<dbReference type="EMBL" id="AF169037">
    <property type="protein sequence ID" value="AAF65929.1"/>
    <property type="molecule type" value="mRNA"/>
</dbReference>
<dbReference type="EMBL" id="AF186018">
    <property type="protein sequence ID" value="AAF63682.1"/>
    <property type="status" value="ALT_FRAME"/>
    <property type="molecule type" value="mRNA"/>
</dbReference>
<dbReference type="EMBL" id="AK004395">
    <property type="protein sequence ID" value="BAB23285.1"/>
    <property type="molecule type" value="mRNA"/>
</dbReference>
<dbReference type="EMBL" id="AK043677">
    <property type="protein sequence ID" value="BAC31616.1"/>
    <property type="molecule type" value="mRNA"/>
</dbReference>
<dbReference type="EMBL" id="AK045556">
    <property type="protein sequence ID" value="BAC32416.1"/>
    <property type="molecule type" value="mRNA"/>
</dbReference>
<dbReference type="EMBL" id="AK049700">
    <property type="protein sequence ID" value="BAC33881.1"/>
    <property type="molecule type" value="mRNA"/>
</dbReference>
<dbReference type="EMBL" id="AK122557">
    <property type="protein sequence ID" value="BAC65839.1"/>
    <property type="status" value="ALT_INIT"/>
    <property type="molecule type" value="mRNA"/>
</dbReference>
<dbReference type="EMBL" id="BC010585">
    <property type="protein sequence ID" value="AAH10585.1"/>
    <property type="molecule type" value="mRNA"/>
</dbReference>
<dbReference type="EMBL" id="BC051418">
    <property type="protein sequence ID" value="AAH51418.1"/>
    <property type="molecule type" value="mRNA"/>
</dbReference>
<dbReference type="CCDS" id="CCDS24483.1">
    <molecule id="Q9QYE3-1"/>
</dbReference>
<dbReference type="CCDS" id="CCDS48758.1">
    <molecule id="Q9QYE3-13"/>
</dbReference>
<dbReference type="CCDS" id="CCDS48759.1">
    <molecule id="Q9QYE3-14"/>
</dbReference>
<dbReference type="PIR" id="PT0706">
    <property type="entry name" value="PT0706"/>
</dbReference>
<dbReference type="RefSeq" id="NP_001152761.1">
    <molecule id="Q9QYE3-13"/>
    <property type="nucleotide sequence ID" value="NM_001159289.1"/>
</dbReference>
<dbReference type="RefSeq" id="NP_001152762.1">
    <molecule id="Q9QYE3-14"/>
    <property type="nucleotide sequence ID" value="NM_001159290.1"/>
</dbReference>
<dbReference type="RefSeq" id="NP_001229863.1">
    <property type="nucleotide sequence ID" value="NM_001242934.1"/>
</dbReference>
<dbReference type="RefSeq" id="NP_057916.1">
    <molecule id="Q9QYE3-1"/>
    <property type="nucleotide sequence ID" value="NM_016707.3"/>
</dbReference>
<dbReference type="RefSeq" id="XP_030101408.1">
    <molecule id="Q9QYE3-13"/>
    <property type="nucleotide sequence ID" value="XM_030245548.2"/>
</dbReference>
<dbReference type="RefSeq" id="XP_036012212.1">
    <molecule id="Q9QYE3-1"/>
    <property type="nucleotide sequence ID" value="XM_036156319.1"/>
</dbReference>
<dbReference type="RefSeq" id="XP_036012213.1">
    <molecule id="Q9QYE3-13"/>
    <property type="nucleotide sequence ID" value="XM_036156320.1"/>
</dbReference>
<dbReference type="RefSeq" id="XP_036012214.1">
    <molecule id="Q9QYE3-13"/>
    <property type="nucleotide sequence ID" value="XM_036156321.1"/>
</dbReference>
<dbReference type="RefSeq" id="XP_036012215.1">
    <molecule id="Q9QYE3-13"/>
    <property type="nucleotide sequence ID" value="XM_036156322.1"/>
</dbReference>
<dbReference type="SMR" id="Q9QYE3"/>
<dbReference type="BioGRID" id="199546">
    <property type="interactions" value="4"/>
</dbReference>
<dbReference type="FunCoup" id="Q9QYE3">
    <property type="interactions" value="2036"/>
</dbReference>
<dbReference type="IntAct" id="Q9QYE3">
    <property type="interactions" value="1"/>
</dbReference>
<dbReference type="STRING" id="10090.ENSMUSP00000105140"/>
<dbReference type="GlyGen" id="Q9QYE3">
    <property type="glycosylation" value="5 sites, 2 N-linked glycans (2 sites)"/>
</dbReference>
<dbReference type="iPTMnet" id="Q9QYE3"/>
<dbReference type="PhosphoSitePlus" id="Q9QYE3"/>
<dbReference type="jPOST" id="Q9QYE3"/>
<dbReference type="PaxDb" id="10090-ENSMUSP00000000881"/>
<dbReference type="PeptideAtlas" id="Q9QYE3"/>
<dbReference type="ProteomicsDB" id="273468">
    <molecule id="Q9QYE3-1"/>
</dbReference>
<dbReference type="ProteomicsDB" id="273469">
    <molecule id="Q9QYE3-10"/>
</dbReference>
<dbReference type="ProteomicsDB" id="273470">
    <molecule id="Q9QYE3-11"/>
</dbReference>
<dbReference type="ProteomicsDB" id="273471">
    <molecule id="Q9QYE3-12"/>
</dbReference>
<dbReference type="ProteomicsDB" id="273472">
    <molecule id="Q9QYE3-13"/>
</dbReference>
<dbReference type="ProteomicsDB" id="273473">
    <molecule id="Q9QYE3-14"/>
</dbReference>
<dbReference type="ProteomicsDB" id="273474">
    <molecule id="Q9QYE3-15"/>
</dbReference>
<dbReference type="ProteomicsDB" id="273475">
    <molecule id="Q9QYE3-16"/>
</dbReference>
<dbReference type="Antibodypedia" id="30518">
    <property type="antibodies" value="491 antibodies from 37 providers"/>
</dbReference>
<dbReference type="DNASU" id="14025"/>
<dbReference type="Ensembl" id="ENSMUST00000000881.13">
    <molecule id="Q9QYE3-1"/>
    <property type="protein sequence ID" value="ENSMUSP00000000881.7"/>
    <property type="gene ID" value="ENSMUSG00000000861.16"/>
</dbReference>
<dbReference type="Ensembl" id="ENSMUST00000109516.8">
    <molecule id="Q9QYE3-13"/>
    <property type="protein sequence ID" value="ENSMUSP00000105142.2"/>
    <property type="gene ID" value="ENSMUSG00000000861.16"/>
</dbReference>
<dbReference type="Ensembl" id="ENSMUST00000118955.2">
    <molecule id="Q9QYE3-14"/>
    <property type="protein sequence ID" value="ENSMUSP00000112948.2"/>
    <property type="gene ID" value="ENSMUSG00000000861.16"/>
</dbReference>
<dbReference type="GeneID" id="14025"/>
<dbReference type="KEGG" id="mmu:14025"/>
<dbReference type="UCSC" id="uc007ifs.2">
    <molecule id="Q9QYE3-15"/>
    <property type="organism name" value="mouse"/>
</dbReference>
<dbReference type="UCSC" id="uc007ifu.2">
    <molecule id="Q9QYE3-1"/>
    <property type="organism name" value="mouse"/>
</dbReference>
<dbReference type="UCSC" id="uc007ifv.2">
    <molecule id="Q9QYE3-13"/>
    <property type="organism name" value="mouse"/>
</dbReference>
<dbReference type="UCSC" id="uc007ifw.2">
    <molecule id="Q9QYE3-14"/>
    <property type="organism name" value="mouse"/>
</dbReference>
<dbReference type="AGR" id="MGI:106190"/>
<dbReference type="CTD" id="53335"/>
<dbReference type="MGI" id="MGI:106190">
    <property type="gene designation" value="Bcl11a"/>
</dbReference>
<dbReference type="VEuPathDB" id="HostDB:ENSMUSG00000000861"/>
<dbReference type="eggNOG" id="KOG1721">
    <property type="taxonomic scope" value="Eukaryota"/>
</dbReference>
<dbReference type="GeneTree" id="ENSGT00940000156983"/>
<dbReference type="HOGENOM" id="CLU_1237453_0_0_1"/>
<dbReference type="InParanoid" id="Q9QYE3"/>
<dbReference type="OMA" id="TKCCEFC"/>
<dbReference type="OrthoDB" id="10046198at2759"/>
<dbReference type="PhylomeDB" id="Q9QYE3"/>
<dbReference type="TreeFam" id="TF318131"/>
<dbReference type="BioGRID-ORCS" id="14025">
    <property type="hits" value="0 hits in 79 CRISPR screens"/>
</dbReference>
<dbReference type="ChiTaRS" id="Bcl11a">
    <property type="organism name" value="mouse"/>
</dbReference>
<dbReference type="PRO" id="PR:Q9QYE3"/>
<dbReference type="Proteomes" id="UP000000589">
    <property type="component" value="Chromosome 11"/>
</dbReference>
<dbReference type="RNAct" id="Q9QYE3">
    <property type="molecule type" value="protein"/>
</dbReference>
<dbReference type="Bgee" id="ENSMUSG00000000861">
    <property type="expression patterns" value="Expressed in rostral migratory stream and 233 other cell types or tissues"/>
</dbReference>
<dbReference type="ExpressionAtlas" id="Q9QYE3">
    <property type="expression patterns" value="baseline and differential"/>
</dbReference>
<dbReference type="GO" id="GO:0005737">
    <property type="term" value="C:cytoplasm"/>
    <property type="evidence" value="ECO:0007669"/>
    <property type="project" value="UniProtKB-SubCell"/>
</dbReference>
<dbReference type="GO" id="GO:0016604">
    <property type="term" value="C:nuclear body"/>
    <property type="evidence" value="ECO:0000314"/>
    <property type="project" value="UniProtKB"/>
</dbReference>
<dbReference type="GO" id="GO:0005634">
    <property type="term" value="C:nucleus"/>
    <property type="evidence" value="ECO:0000314"/>
    <property type="project" value="MGI"/>
</dbReference>
<dbReference type="GO" id="GO:0016514">
    <property type="term" value="C:SWI/SNF complex"/>
    <property type="evidence" value="ECO:0000314"/>
    <property type="project" value="UniProtKB"/>
</dbReference>
<dbReference type="GO" id="GO:0003714">
    <property type="term" value="F:transcription corepressor activity"/>
    <property type="evidence" value="ECO:0000314"/>
    <property type="project" value="MGI"/>
</dbReference>
<dbReference type="GO" id="GO:0008270">
    <property type="term" value="F:zinc ion binding"/>
    <property type="evidence" value="ECO:0007669"/>
    <property type="project" value="UniProtKB-KW"/>
</dbReference>
<dbReference type="GO" id="GO:0030183">
    <property type="term" value="P:B cell differentiation"/>
    <property type="evidence" value="ECO:0000315"/>
    <property type="project" value="MGI"/>
</dbReference>
<dbReference type="GO" id="GO:0010467">
    <property type="term" value="P:gene expression"/>
    <property type="evidence" value="ECO:0000315"/>
    <property type="project" value="MGI"/>
</dbReference>
<dbReference type="GO" id="GO:0010629">
    <property type="term" value="P:negative regulation of gene expression"/>
    <property type="evidence" value="ECO:0000315"/>
    <property type="project" value="MGI"/>
</dbReference>
<dbReference type="GO" id="GO:0000122">
    <property type="term" value="P:negative regulation of transcription by RNA polymerase II"/>
    <property type="evidence" value="ECO:0000315"/>
    <property type="project" value="ARUK-UCL"/>
</dbReference>
<dbReference type="GO" id="GO:0016925">
    <property type="term" value="P:protein sumoylation"/>
    <property type="evidence" value="ECO:0000315"/>
    <property type="project" value="UniProtKB"/>
</dbReference>
<dbReference type="GO" id="GO:0030217">
    <property type="term" value="P:T cell differentiation"/>
    <property type="evidence" value="ECO:0000315"/>
    <property type="project" value="MGI"/>
</dbReference>
<dbReference type="FunFam" id="3.30.160.60:FF:000037">
    <property type="entry name" value="B-cell lymphoma/leukemia 11A isoform X1"/>
    <property type="match status" value="1"/>
</dbReference>
<dbReference type="FunFam" id="3.30.160.60:FF:000106">
    <property type="entry name" value="B-cell lymphoma/leukemia 11A isoform X2"/>
    <property type="match status" value="1"/>
</dbReference>
<dbReference type="Gene3D" id="3.30.160.60">
    <property type="entry name" value="Classic Zinc Finger"/>
    <property type="match status" value="2"/>
</dbReference>
<dbReference type="InterPro" id="IPR051497">
    <property type="entry name" value="Dev/Hematopoietic_TF"/>
</dbReference>
<dbReference type="InterPro" id="IPR036236">
    <property type="entry name" value="Znf_C2H2_sf"/>
</dbReference>
<dbReference type="InterPro" id="IPR013087">
    <property type="entry name" value="Znf_C2H2_type"/>
</dbReference>
<dbReference type="PANTHER" id="PTHR45993">
    <property type="entry name" value="B-CELL LYMPHOMA/LEUKEMIA 11"/>
    <property type="match status" value="1"/>
</dbReference>
<dbReference type="PANTHER" id="PTHR45993:SF5">
    <property type="entry name" value="B-CELL LYMPHOMA_LEUKEMIA 11A"/>
    <property type="match status" value="1"/>
</dbReference>
<dbReference type="Pfam" id="PF25491">
    <property type="entry name" value="CCHC_BCL-11A"/>
    <property type="match status" value="1"/>
</dbReference>
<dbReference type="Pfam" id="PF00096">
    <property type="entry name" value="zf-C2H2"/>
    <property type="match status" value="2"/>
</dbReference>
<dbReference type="SMART" id="SM00355">
    <property type="entry name" value="ZnF_C2H2"/>
    <property type="match status" value="3"/>
</dbReference>
<dbReference type="SUPFAM" id="SSF57667">
    <property type="entry name" value="beta-beta-alpha zinc fingers"/>
    <property type="match status" value="1"/>
</dbReference>
<dbReference type="PROSITE" id="PS00028">
    <property type="entry name" value="ZINC_FINGER_C2H2_1"/>
    <property type="match status" value="3"/>
</dbReference>
<dbReference type="PROSITE" id="PS50157">
    <property type="entry name" value="ZINC_FINGER_C2H2_2"/>
    <property type="match status" value="3"/>
</dbReference>
<name>BC11A_MOUSE</name>
<sequence>MSRRKQGKPQHLSKREFSPEPLEAILTDDEPDHGPLGAPEGDHDLLTCGQCQMNFPLGDILIFIEHKRKQCNGSLCLEKGVDKPPSPSPIEMKKASNPVEVGIQVTPEDDDCLSTSSRGICPKQEHIADKLLHWRGLSSPRSAHGALIPTPGMSAEYAPQGICKDEPSSYTCTTCKQPFTSAWFLLQHAQNTHGLRIYLESEHGSPLTPRVGIPSGLGAECPSQPPLHGIHIADNNPFNLLRIPGSVSREASGLAEGRFPPTPPLFSPPPRHHLDPHRIERLGAEEMALATHHPSAFDRVLRLNPMAMEPPAMDFSRRLRELAGNTSSPPLSPGRPSPMQRLLQPFQPGSKPPFLATPPLPPLQSAPPPSQPPVKSKSCEFCGKTFKFQSNLVVHRRSHTGEKPYKCNLCDHACTQASKLKRHMKTHMHKSSPMTVKSDDGLSTASSPEPGTSDLVGSASSALKSVVAKFKSENDPNLIPENGDEEEEEDDEEEEEEEEEEEEELTESERVDYGFGLSLEAARHHENSSRGAVVGVGDEGRALPDVMQGMVLSSMQHFSEAFHQVLGEKHKRSHLAEAEGHRDTCDEDSVAGESDRIDDGTVNGRGCSPGESASGGLSKKLLLGSPSSLSPFSKRIKLEKEFDLPPAAMPNTENVYSQWLAGYAASRQLKDPFLTFGDSRQSPFASSSEHSSENGSLRFSTPPGELDGGISGRSGTGSGGSTPHISGPGPGRPSSKEGRRSDTCEYCGKVFKNCSNLTVHRRSHTGERPYKCELCNYACAQSSKLTRHMKTHGQVGKDVYKCEICKMPFSVYSTLEKHMKKWHSDRVLNNDIKTE</sequence>
<comment type="function">
    <text evidence="1 4 5 6 8">Transcription factor (By similarity). Associated with the BAF SWI/SNF chromatin remodeling complex (PubMed:23644491). Binds to the 5'-TGACCA-3' sequence motif in regulatory regions of target genes (By similarity). Involved in brain development (By similarity). May play a role in hematopoiesis (PubMed:10757802). Essential factor in lymphopoiesis, required for B-cell formation in fetal liver (PubMed:12717432). May function as a modulator of the transcriptional repression activity of NR2F2 (PubMed:10744719).</text>
</comment>
<comment type="subunit">
    <text evidence="1 4 7">Homotetrameric; self-associates via C2HC-type zinc finger domain (By similarity). Interacts with MTA2, a component of the nucleosome remodeling and deacetylase (NuRD) repressor complex (By similarity). Interacts with NR2F1, PIAS3, NR2F2 and NR2F6 (PubMed:10744719, PubMed:18681895). Interacts with TBR1 (By similarity).</text>
</comment>
<comment type="subcellular location">
    <subcellularLocation>
        <location evidence="7">Cytoplasm</location>
    </subcellularLocation>
    <subcellularLocation>
        <location evidence="7">Nucleus</location>
    </subcellularLocation>
    <text>Associates with the nuclear body. Colocalizes with SUMO1 and SENP2 in nuclear speckles.</text>
</comment>
<comment type="alternative products">
    <event type="alternative splicing"/>
    <isoform>
        <id>Q9QYE3-1</id>
        <name>1</name>
        <name>a</name>
        <sequence type="displayed"/>
    </isoform>
    <isoform>
        <id>Q9QYE3-10</id>
        <name>2</name>
        <name>b</name>
        <sequence type="described" ref="VSP_009557 VSP_009563"/>
    </isoform>
    <isoform>
        <id>Q9QYE3-11</id>
        <name>3</name>
        <name>c</name>
        <sequence type="described" ref="VSP_009560"/>
    </isoform>
    <isoform>
        <id>Q9QYE3-12</id>
        <name>4</name>
        <sequence type="described" ref="VSP_009556"/>
    </isoform>
    <isoform>
        <id>Q9QYE3-13</id>
        <name>5</name>
        <sequence type="described" ref="VSP_009561 VSP_009562"/>
    </isoform>
    <isoform>
        <id>Q9QYE3-14</id>
        <name>6</name>
        <sequence type="described" ref="VSP_009558 VSP_009561 VSP_009562"/>
    </isoform>
    <isoform>
        <id>Q9QYE3-15</id>
        <name>7</name>
        <sequence type="described" ref="VSP_009559"/>
    </isoform>
    <isoform>
        <id>Q9QYE3-16</id>
        <name>8</name>
        <sequence type="described" ref="VSP_009557"/>
    </isoform>
</comment>
<comment type="tissue specificity">
    <text>Isoforms are expressed in a tissue-specific fashion. Isoforms 1, isoform 2, and isoform 3 are expressed at similar levels in testis, kidney and spleen. Isoform 1 is expressed in the stomach, and isoform 2 is expressed exclusively in the lung. Overexpression following proviral integration in hematopoietic cells results in the generation of myeloid leukemia.</text>
</comment>
<comment type="developmental stage">
    <text evidence="9">Highly expressed in the developing embryo. Expressed in developing brain from 10.5 dpc, with highest expression in the forebrain between 12.5 dpc and 14.5 dpc. Central nervous system expression persists throughout the postnatal period in the cortex, hippocampus, olfactory buld, and, to a lesser extent, in the cerebellum.</text>
</comment>
<comment type="domain">
    <text evidence="1">The N-terminus is involved in protein dimerization and in transactivation of transcription.</text>
</comment>
<comment type="domain">
    <text evidence="1">Zinc finger domains are necessary for sequence-specific binding to DNA.</text>
</comment>
<comment type="PTM">
    <text evidence="7">Sumoylated with SUMO1.</text>
</comment>
<comment type="disruption phenotype">
    <text evidence="9">Germline biallelic loss of Bcl11a leads to perinatal lethality. Bcl11a +/- mice have a significantly decreased brain volume, affecting both gray and white matter. The limbic system (hippocampus and amygdala) is among the brain regions that are more severely affected. Bcl11a +/- mice display normal novelty-seeking behavior but show long-term social memory defects, impaired sociability, and increased physical activity. Bcl11a +/- mice show dynamic postnatal transcriptional dysregulation in the brain.</text>
</comment>
<comment type="sequence caution" evidence="14">
    <conflict type="frameshift">
        <sequence resource="EMBL-CDS" id="AAF63682"/>
    </conflict>
</comment>
<comment type="sequence caution" evidence="14">
    <conflict type="erroneous initiation">
        <sequence resource="EMBL-CDS" id="BAC65839"/>
    </conflict>
    <text>Truncated N-terminus.</text>
</comment>